<gene>
    <name type="primary">RELL2</name>
    <name type="synonym">C5orf16</name>
    <name type="ORF">UNQ9423/PRO34565</name>
</gene>
<name>RELL2_HUMAN</name>
<organism>
    <name type="scientific">Homo sapiens</name>
    <name type="common">Human</name>
    <dbReference type="NCBI Taxonomy" id="9606"/>
    <lineage>
        <taxon>Eukaryota</taxon>
        <taxon>Metazoa</taxon>
        <taxon>Chordata</taxon>
        <taxon>Craniata</taxon>
        <taxon>Vertebrata</taxon>
        <taxon>Euteleostomi</taxon>
        <taxon>Mammalia</taxon>
        <taxon>Eutheria</taxon>
        <taxon>Euarchontoglires</taxon>
        <taxon>Primates</taxon>
        <taxon>Haplorrhini</taxon>
        <taxon>Catarrhini</taxon>
        <taxon>Hominidae</taxon>
        <taxon>Homo</taxon>
    </lineage>
</organism>
<keyword id="KW-1003">Cell membrane</keyword>
<keyword id="KW-0472">Membrane</keyword>
<keyword id="KW-0597">Phosphoprotein</keyword>
<keyword id="KW-1267">Proteomics identification</keyword>
<keyword id="KW-1185">Reference proteome</keyword>
<keyword id="KW-0812">Transmembrane</keyword>
<keyword id="KW-1133">Transmembrane helix</keyword>
<dbReference type="EMBL" id="AK075064">
    <property type="protein sequence ID" value="BAC11380.1"/>
    <property type="molecule type" value="mRNA"/>
</dbReference>
<dbReference type="EMBL" id="AY358163">
    <property type="protein sequence ID" value="AAQ88530.1"/>
    <property type="molecule type" value="mRNA"/>
</dbReference>
<dbReference type="EMBL" id="CH471062">
    <property type="protein sequence ID" value="EAW61911.1"/>
    <property type="molecule type" value="Genomic_DNA"/>
</dbReference>
<dbReference type="EMBL" id="CH471062">
    <property type="protein sequence ID" value="EAW61913.1"/>
    <property type="molecule type" value="Genomic_DNA"/>
</dbReference>
<dbReference type="EMBL" id="BC063469">
    <property type="protein sequence ID" value="AAH63469.1"/>
    <property type="molecule type" value="mRNA"/>
</dbReference>
<dbReference type="CCDS" id="CCDS4265.1"/>
<dbReference type="RefSeq" id="NP_001123501.1">
    <property type="nucleotide sequence ID" value="NM_001130029.2"/>
</dbReference>
<dbReference type="RefSeq" id="NP_776189.3">
    <property type="nucleotide sequence ID" value="NM_173828.4"/>
</dbReference>
<dbReference type="RefSeq" id="XP_047273069.1">
    <property type="nucleotide sequence ID" value="XM_047417113.1"/>
</dbReference>
<dbReference type="SMR" id="Q8NC24"/>
<dbReference type="BioGRID" id="130157">
    <property type="interactions" value="50"/>
</dbReference>
<dbReference type="FunCoup" id="Q8NC24">
    <property type="interactions" value="131"/>
</dbReference>
<dbReference type="IntAct" id="Q8NC24">
    <property type="interactions" value="48"/>
</dbReference>
<dbReference type="STRING" id="9606.ENSP00000297164"/>
<dbReference type="iPTMnet" id="Q8NC24"/>
<dbReference type="PhosphoSitePlus" id="Q8NC24"/>
<dbReference type="BioMuta" id="RELL2"/>
<dbReference type="DMDM" id="74715151"/>
<dbReference type="MassIVE" id="Q8NC24"/>
<dbReference type="PaxDb" id="9606-ENSP00000297164"/>
<dbReference type="PeptideAtlas" id="Q8NC24"/>
<dbReference type="ProteomicsDB" id="72844"/>
<dbReference type="Antibodypedia" id="53224">
    <property type="antibodies" value="61 antibodies from 14 providers"/>
</dbReference>
<dbReference type="DNASU" id="285613"/>
<dbReference type="Ensembl" id="ENST00000297164.8">
    <property type="protein sequence ID" value="ENSP00000297164.3"/>
    <property type="gene ID" value="ENSG00000164620.9"/>
</dbReference>
<dbReference type="Ensembl" id="ENST00000444782.5">
    <property type="protein sequence ID" value="ENSP00000409443.1"/>
    <property type="gene ID" value="ENSG00000164620.9"/>
</dbReference>
<dbReference type="GeneID" id="285613"/>
<dbReference type="KEGG" id="hsa:285613"/>
<dbReference type="MANE-Select" id="ENST00000297164.8">
    <property type="protein sequence ID" value="ENSP00000297164.3"/>
    <property type="RefSeq nucleotide sequence ID" value="NM_173828.5"/>
    <property type="RefSeq protein sequence ID" value="NP_776189.3"/>
</dbReference>
<dbReference type="UCSC" id="uc003llh.4">
    <property type="organism name" value="human"/>
</dbReference>
<dbReference type="AGR" id="HGNC:26902"/>
<dbReference type="CTD" id="285613"/>
<dbReference type="DisGeNET" id="285613"/>
<dbReference type="GeneCards" id="RELL2"/>
<dbReference type="HGNC" id="HGNC:26902">
    <property type="gene designation" value="RELL2"/>
</dbReference>
<dbReference type="HPA" id="ENSG00000164620">
    <property type="expression patterns" value="Tissue enhanced (brain, parathyroid gland, pituitary gland)"/>
</dbReference>
<dbReference type="MIM" id="611213">
    <property type="type" value="gene"/>
</dbReference>
<dbReference type="neXtProt" id="NX_Q8NC24"/>
<dbReference type="OpenTargets" id="ENSG00000164620"/>
<dbReference type="PharmGKB" id="PA162401073"/>
<dbReference type="VEuPathDB" id="HostDB:ENSG00000164620"/>
<dbReference type="eggNOG" id="ENOG502RZW4">
    <property type="taxonomic scope" value="Eukaryota"/>
</dbReference>
<dbReference type="GeneTree" id="ENSGT00940000160541"/>
<dbReference type="HOGENOM" id="CLU_074130_0_0_1"/>
<dbReference type="InParanoid" id="Q8NC24"/>
<dbReference type="OMA" id="IPCAHEG"/>
<dbReference type="OrthoDB" id="9353106at2759"/>
<dbReference type="PAN-GO" id="Q8NC24">
    <property type="GO annotations" value="2 GO annotations based on evolutionary models"/>
</dbReference>
<dbReference type="PhylomeDB" id="Q8NC24"/>
<dbReference type="TreeFam" id="TF332339"/>
<dbReference type="PathwayCommons" id="Q8NC24"/>
<dbReference type="SignaLink" id="Q8NC24"/>
<dbReference type="BioGRID-ORCS" id="285613">
    <property type="hits" value="7 hits in 1152 CRISPR screens"/>
</dbReference>
<dbReference type="ChiTaRS" id="RELL2">
    <property type="organism name" value="human"/>
</dbReference>
<dbReference type="GenomeRNAi" id="285613"/>
<dbReference type="Pharos" id="Q8NC24">
    <property type="development level" value="Tbio"/>
</dbReference>
<dbReference type="PRO" id="PR:Q8NC24"/>
<dbReference type="Proteomes" id="UP000005640">
    <property type="component" value="Chromosome 5"/>
</dbReference>
<dbReference type="RNAct" id="Q8NC24">
    <property type="molecule type" value="protein"/>
</dbReference>
<dbReference type="Bgee" id="ENSG00000164620">
    <property type="expression patterns" value="Expressed in right frontal lobe and 116 other cell types or tissues"/>
</dbReference>
<dbReference type="ExpressionAtlas" id="Q8NC24">
    <property type="expression patterns" value="baseline and differential"/>
</dbReference>
<dbReference type="GO" id="GO:0005604">
    <property type="term" value="C:basement membrane"/>
    <property type="evidence" value="ECO:0007669"/>
    <property type="project" value="Ensembl"/>
</dbReference>
<dbReference type="GO" id="GO:0005886">
    <property type="term" value="C:plasma membrane"/>
    <property type="evidence" value="ECO:0007669"/>
    <property type="project" value="UniProtKB-SubCell"/>
</dbReference>
<dbReference type="GO" id="GO:0005518">
    <property type="term" value="F:collagen binding"/>
    <property type="evidence" value="ECO:0007669"/>
    <property type="project" value="Ensembl"/>
</dbReference>
<dbReference type="GO" id="GO:0010811">
    <property type="term" value="P:positive regulation of cell-substrate adhesion"/>
    <property type="evidence" value="ECO:0000318"/>
    <property type="project" value="GO_Central"/>
</dbReference>
<dbReference type="GO" id="GO:1900745">
    <property type="term" value="P:positive regulation of p38MAPK cascade"/>
    <property type="evidence" value="ECO:0000314"/>
    <property type="project" value="UniProtKB"/>
</dbReference>
<dbReference type="InterPro" id="IPR042313">
    <property type="entry name" value="RELL2"/>
</dbReference>
<dbReference type="InterPro" id="IPR022248">
    <property type="entry name" value="TNF_rcpt_RELT"/>
</dbReference>
<dbReference type="PANTHER" id="PTHR31481:SF0">
    <property type="entry name" value="RELT-LIKE PROTEIN 2"/>
    <property type="match status" value="1"/>
</dbReference>
<dbReference type="PANTHER" id="PTHR31481">
    <property type="entry name" value="RELT-LIKE PROTEIN 2 RELL2"/>
    <property type="match status" value="1"/>
</dbReference>
<dbReference type="Pfam" id="PF12606">
    <property type="entry name" value="RELT"/>
    <property type="match status" value="1"/>
</dbReference>
<feature type="chain" id="PRO_0000249845" description="RELT-like protein 2">
    <location>
        <begin position="1"/>
        <end position="303"/>
    </location>
</feature>
<feature type="transmembrane region" description="Helical" evidence="2">
    <location>
        <begin position="15"/>
        <end position="35"/>
    </location>
</feature>
<feature type="region of interest" description="Disordered" evidence="3">
    <location>
        <begin position="46"/>
        <end position="67"/>
    </location>
</feature>
<feature type="region of interest" description="Disordered" evidence="3">
    <location>
        <begin position="132"/>
        <end position="303"/>
    </location>
</feature>
<feature type="compositionally biased region" description="Basic and acidic residues" evidence="3">
    <location>
        <begin position="148"/>
        <end position="158"/>
    </location>
</feature>
<feature type="compositionally biased region" description="Basic and acidic residues" evidence="3">
    <location>
        <begin position="172"/>
        <end position="188"/>
    </location>
</feature>
<feature type="compositionally biased region" description="Gly residues" evidence="3">
    <location>
        <begin position="194"/>
        <end position="212"/>
    </location>
</feature>
<feature type="compositionally biased region" description="Polar residues" evidence="3">
    <location>
        <begin position="278"/>
        <end position="296"/>
    </location>
</feature>
<feature type="modified residue" description="Phosphoserine" evidence="1">
    <location>
        <position position="52"/>
    </location>
</feature>
<feature type="sequence variant" id="VAR_027496" description="In dbSNP:rs17855845." evidence="5">
    <original>S</original>
    <variation>P</variation>
    <location>
        <position position="128"/>
    </location>
</feature>
<feature type="sequence variant" id="VAR_027497" description="In dbSNP:rs14251." evidence="4 5">
    <original>L</original>
    <variation>I</variation>
    <location>
        <position position="133"/>
    </location>
</feature>
<feature type="sequence variant" id="VAR_027498" description="In dbSNP:rs17855844." evidence="4 5">
    <original>G</original>
    <variation>R</variation>
    <location>
        <position position="196"/>
    </location>
</feature>
<feature type="sequence variant" id="VAR_027499" description="In dbSNP:rs11742646." evidence="4 5">
    <original>Q</original>
    <variation>E</variation>
    <location>
        <position position="283"/>
    </location>
</feature>
<reference key="1">
    <citation type="journal article" date="2005" name="DNA Res.">
        <title>Signal sequence and keyword trap in silico for selection of full-length human cDNAs encoding secretion or membrane proteins from oligo-capped cDNA libraries.</title>
        <authorList>
            <person name="Otsuki T."/>
            <person name="Ota T."/>
            <person name="Nishikawa T."/>
            <person name="Hayashi K."/>
            <person name="Suzuki Y."/>
            <person name="Yamamoto J."/>
            <person name="Wakamatsu A."/>
            <person name="Kimura K."/>
            <person name="Sakamoto K."/>
            <person name="Hatano N."/>
            <person name="Kawai Y."/>
            <person name="Ishii S."/>
            <person name="Saito K."/>
            <person name="Kojima S."/>
            <person name="Sugiyama T."/>
            <person name="Ono T."/>
            <person name="Okano K."/>
            <person name="Yoshikawa Y."/>
            <person name="Aotsuka S."/>
            <person name="Sasaki N."/>
            <person name="Hattori A."/>
            <person name="Okumura K."/>
            <person name="Nagai K."/>
            <person name="Sugano S."/>
            <person name="Isogai T."/>
        </authorList>
    </citation>
    <scope>NUCLEOTIDE SEQUENCE [LARGE SCALE MRNA]</scope>
    <source>
        <tissue>Placenta</tissue>
    </source>
</reference>
<reference key="2">
    <citation type="journal article" date="2003" name="Genome Res.">
        <title>The secreted protein discovery initiative (SPDI), a large-scale effort to identify novel human secreted and transmembrane proteins: a bioinformatics assessment.</title>
        <authorList>
            <person name="Clark H.F."/>
            <person name="Gurney A.L."/>
            <person name="Abaya E."/>
            <person name="Baker K."/>
            <person name="Baldwin D.T."/>
            <person name="Brush J."/>
            <person name="Chen J."/>
            <person name="Chow B."/>
            <person name="Chui C."/>
            <person name="Crowley C."/>
            <person name="Currell B."/>
            <person name="Deuel B."/>
            <person name="Dowd P."/>
            <person name="Eaton D."/>
            <person name="Foster J.S."/>
            <person name="Grimaldi C."/>
            <person name="Gu Q."/>
            <person name="Hass P.E."/>
            <person name="Heldens S."/>
            <person name="Huang A."/>
            <person name="Kim H.S."/>
            <person name="Klimowski L."/>
            <person name="Jin Y."/>
            <person name="Johnson S."/>
            <person name="Lee J."/>
            <person name="Lewis L."/>
            <person name="Liao D."/>
            <person name="Mark M.R."/>
            <person name="Robbie E."/>
            <person name="Sanchez C."/>
            <person name="Schoenfeld J."/>
            <person name="Seshagiri S."/>
            <person name="Simmons L."/>
            <person name="Singh J."/>
            <person name="Smith V."/>
            <person name="Stinson J."/>
            <person name="Vagts A."/>
            <person name="Vandlen R.L."/>
            <person name="Watanabe C."/>
            <person name="Wieand D."/>
            <person name="Woods K."/>
            <person name="Xie M.-H."/>
            <person name="Yansura D.G."/>
            <person name="Yi S."/>
            <person name="Yu G."/>
            <person name="Yuan J."/>
            <person name="Zhang M."/>
            <person name="Zhang Z."/>
            <person name="Goddard A.D."/>
            <person name="Wood W.I."/>
            <person name="Godowski P.J."/>
            <person name="Gray A.M."/>
        </authorList>
    </citation>
    <scope>NUCLEOTIDE SEQUENCE [LARGE SCALE MRNA]</scope>
    <scope>VARIANTS ILE-133; ARG-196 AND GLU-283</scope>
</reference>
<reference key="3">
    <citation type="submission" date="2005-09" db="EMBL/GenBank/DDBJ databases">
        <authorList>
            <person name="Mural R.J."/>
            <person name="Istrail S."/>
            <person name="Sutton G.G."/>
            <person name="Florea L."/>
            <person name="Halpern A.L."/>
            <person name="Mobarry C.M."/>
            <person name="Lippert R."/>
            <person name="Walenz B."/>
            <person name="Shatkay H."/>
            <person name="Dew I."/>
            <person name="Miller J.R."/>
            <person name="Flanigan M.J."/>
            <person name="Edwards N.J."/>
            <person name="Bolanos R."/>
            <person name="Fasulo D."/>
            <person name="Halldorsson B.V."/>
            <person name="Hannenhalli S."/>
            <person name="Turner R."/>
            <person name="Yooseph S."/>
            <person name="Lu F."/>
            <person name="Nusskern D.R."/>
            <person name="Shue B.C."/>
            <person name="Zheng X.H."/>
            <person name="Zhong F."/>
            <person name="Delcher A.L."/>
            <person name="Huson D.H."/>
            <person name="Kravitz S.A."/>
            <person name="Mouchard L."/>
            <person name="Reinert K."/>
            <person name="Remington K.A."/>
            <person name="Clark A.G."/>
            <person name="Waterman M.S."/>
            <person name="Eichler E.E."/>
            <person name="Adams M.D."/>
            <person name="Hunkapiller M.W."/>
            <person name="Myers E.W."/>
            <person name="Venter J.C."/>
        </authorList>
    </citation>
    <scope>NUCLEOTIDE SEQUENCE [LARGE SCALE GENOMIC DNA]</scope>
</reference>
<reference key="4">
    <citation type="journal article" date="2004" name="Genome Res.">
        <title>The status, quality, and expansion of the NIH full-length cDNA project: the Mammalian Gene Collection (MGC).</title>
        <authorList>
            <consortium name="The MGC Project Team"/>
        </authorList>
    </citation>
    <scope>NUCLEOTIDE SEQUENCE [LARGE SCALE MRNA]</scope>
    <scope>VARIANTS PRO-128; ILE-133; ARG-196 AND GLU-283</scope>
    <source>
        <tissue>Blood</tissue>
    </source>
</reference>
<reference key="5">
    <citation type="journal article" date="2006" name="Biochem. Biophys. Res. Commun.">
        <title>Identification of RELT homologues that associate with RELT and are phosphorylated by OSR1.</title>
        <authorList>
            <person name="Cusick J.K."/>
            <person name="Xu L.-G."/>
            <person name="Bin L.-H."/>
            <person name="Han K.-J."/>
            <person name="Shu H.-B."/>
        </authorList>
    </citation>
    <scope>SUBCELLULAR LOCATION</scope>
    <scope>TISSUE SPECIFICITY</scope>
    <scope>INTERACTION WITH RELT; RELL1 AND OXSR1</scope>
    <scope>PHOSPHORYLATION</scope>
</reference>
<reference key="6">
    <citation type="journal article" date="2010" name="Cell. Immunol.">
        <title>RELT induces cellular death in HEK 293 epithelial cells.</title>
        <authorList>
            <person name="Cusick J.K."/>
            <person name="Mustian A."/>
            <person name="Goldberg K."/>
            <person name="Reyland M.E."/>
        </authorList>
    </citation>
    <scope>FUNCTION</scope>
    <scope>INTERACTION WITH TRAF2</scope>
</reference>
<reference key="7">
    <citation type="journal article" date="2012" name="Mol. Cell. Biochem.">
        <title>Identification of PLSCR1 as a protein that interacts with RELT family members.</title>
        <authorList>
            <person name="Cusick J.K."/>
            <person name="Mustian A."/>
            <person name="Jacobs A.T."/>
            <person name="Reyland M.E."/>
        </authorList>
    </citation>
    <scope>INTERACTION WITH PLSCR1</scope>
</reference>
<reference key="8">
    <citation type="journal article" date="2017" name="Biochem. Biophys. Res. Commun.">
        <title>RELT family members activate p38 and induce apoptosis by a mechanism distinct from TNFR1.</title>
        <authorList>
            <person name="Moua P."/>
            <person name="Checketts M."/>
            <person name="Xu L.G."/>
            <person name="Shu H.B."/>
            <person name="Reyland M.E."/>
            <person name="Cusick J.K."/>
        </authorList>
    </citation>
    <scope>FUNCTION</scope>
</reference>
<protein>
    <recommendedName>
        <fullName>RELT-like protein 2</fullName>
    </recommendedName>
</protein>
<comment type="function">
    <text evidence="7 9">Induces activation of MAPK14/p38 cascade, when overexpressed (PubMed:28688764). Induces apoptosis, when overexpressed (PubMed:19969290).</text>
</comment>
<comment type="subunit">
    <text evidence="6 7 8">Interacts with RELT, RELL1 and OXSR1 (PubMed:16389068). Interacts with PLSCR1 (PubMed:22052202). Interacts with TRAF2 (PubMed:19969290).</text>
</comment>
<comment type="interaction">
    <interactant intactId="EBI-10269209">
        <id>Q8NC24</id>
    </interactant>
    <interactant intactId="EBI-12109402">
        <id>Q86W74-2</id>
        <label>ANKRD46</label>
    </interactant>
    <organismsDiffer>false</organismsDiffer>
    <experiments>3</experiments>
</comment>
<comment type="interaction">
    <interactant intactId="EBI-10269209">
        <id>Q8NC24</id>
    </interactant>
    <interactant intactId="EBI-12092171">
        <id>Q12797-6</id>
        <label>ASPH</label>
    </interactant>
    <organismsDiffer>false</organismsDiffer>
    <experiments>3</experiments>
</comment>
<comment type="interaction">
    <interactant intactId="EBI-10269209">
        <id>Q8NC24</id>
    </interactant>
    <interactant intactId="EBI-358858">
        <id>O14735</id>
        <label>CDIPT</label>
    </interactant>
    <organismsDiffer>false</organismsDiffer>
    <experiments>3</experiments>
</comment>
<comment type="interaction">
    <interactant intactId="EBI-10269209">
        <id>Q8NC24</id>
    </interactant>
    <interactant intactId="EBI-11959453">
        <id>Q8NHS1</id>
        <label>CLDND2</label>
    </interactant>
    <organismsDiffer>false</organismsDiffer>
    <experiments>3</experiments>
</comment>
<comment type="interaction">
    <interactant intactId="EBI-10269209">
        <id>Q8NC24</id>
    </interactant>
    <interactant intactId="EBI-12211159">
        <id>P29400-2</id>
        <label>COL4A5</label>
    </interactant>
    <organismsDiffer>false</organismsDiffer>
    <experiments>3</experiments>
</comment>
<comment type="interaction">
    <interactant intactId="EBI-10269209">
        <id>Q8NC24</id>
    </interactant>
    <interactant intactId="EBI-2876774">
        <id>Q92520</id>
        <label>FAM3C</label>
    </interactant>
    <organismsDiffer>false</organismsDiffer>
    <experiments>3</experiments>
</comment>
<comment type="interaction">
    <interactant intactId="EBI-10269209">
        <id>Q8NC24</id>
    </interactant>
    <interactant intactId="EBI-12033434">
        <id>Q9UBY5</id>
        <label>LPAR3</label>
    </interactant>
    <organismsDiffer>false</organismsDiffer>
    <experiments>3</experiments>
</comment>
<comment type="interaction">
    <interactant intactId="EBI-10269209">
        <id>Q8NC24</id>
    </interactant>
    <interactant intactId="EBI-8449636">
        <id>P30301</id>
        <label>MIP</label>
    </interactant>
    <organismsDiffer>false</organismsDiffer>
    <experiments>3</experiments>
</comment>
<comment type="interaction">
    <interactant intactId="EBI-10269209">
        <id>Q8NC24</id>
    </interactant>
    <interactant intactId="EBI-6380741">
        <id>P42857</id>
        <label>NSG1</label>
    </interactant>
    <organismsDiffer>false</organismsDiffer>
    <experiments>3</experiments>
</comment>
<comment type="interaction">
    <interactant intactId="EBI-10269209">
        <id>Q8NC24</id>
    </interactant>
    <interactant intactId="EBI-620853">
        <id>O95747</id>
        <label>OXSR1</label>
    </interactant>
    <organismsDiffer>false</organismsDiffer>
    <experiments>9</experiments>
</comment>
<comment type="interaction">
    <interactant intactId="EBI-10269209">
        <id>Q8NC24</id>
    </interactant>
    <interactant intactId="EBI-12188331">
        <id>P60201-2</id>
        <label>PLP1</label>
    </interactant>
    <organismsDiffer>false</organismsDiffer>
    <experiments>3</experiments>
</comment>
<comment type="interaction">
    <interactant intactId="EBI-10269209">
        <id>Q8NC24</id>
    </interactant>
    <interactant intactId="EBI-10244780">
        <id>Q5QGT7</id>
        <label>RTP2</label>
    </interactant>
    <organismsDiffer>false</organismsDiffer>
    <experiments>3</experiments>
</comment>
<comment type="interaction">
    <interactant intactId="EBI-10269209">
        <id>Q8NC24</id>
    </interactant>
    <interactant intactId="EBI-1058865">
        <id>O75396</id>
        <label>SEC22B</label>
    </interactant>
    <organismsDiffer>false</organismsDiffer>
    <experiments>3</experiments>
</comment>
<comment type="interaction">
    <interactant intactId="EBI-10269209">
        <id>Q8NC24</id>
    </interactant>
    <interactant intactId="EBI-10262251">
        <id>Q8IWU4</id>
        <label>SLC30A8</label>
    </interactant>
    <organismsDiffer>false</organismsDiffer>
    <experiments>3</experiments>
</comment>
<comment type="interaction">
    <interactant intactId="EBI-10269209">
        <id>Q8NC24</id>
    </interactant>
    <interactant intactId="EBI-12870360">
        <id>P78382</id>
        <label>SLC35A1</label>
    </interactant>
    <organismsDiffer>false</organismsDiffer>
    <experiments>3</experiments>
</comment>
<comment type="interaction">
    <interactant intactId="EBI-10269209">
        <id>Q8NC24</id>
    </interactant>
    <interactant intactId="EBI-12188413">
        <id>B2RUZ4</id>
        <label>SMIM1</label>
    </interactant>
    <organismsDiffer>false</organismsDiffer>
    <experiments>3</experiments>
</comment>
<comment type="interaction">
    <interactant intactId="EBI-10269209">
        <id>Q8NC24</id>
    </interactant>
    <interactant intactId="EBI-355727">
        <id>P02786</id>
        <label>TFRC</label>
    </interactant>
    <organismsDiffer>false</organismsDiffer>
    <experiments>3</experiments>
</comment>
<comment type="interaction">
    <interactant intactId="EBI-10269209">
        <id>Q8NC24</id>
    </interactant>
    <interactant intactId="EBI-12045841">
        <id>Q86UF1</id>
        <label>TSPAN33</label>
    </interactant>
    <organismsDiffer>false</organismsDiffer>
    <experiments>3</experiments>
</comment>
<comment type="interaction">
    <interactant intactId="EBI-10269209">
        <id>Q8NC24</id>
    </interactant>
    <interactant intactId="EBI-12195249">
        <id>Q5TGU0</id>
        <label>TSPO2</label>
    </interactant>
    <organismsDiffer>false</organismsDiffer>
    <experiments>3</experiments>
</comment>
<comment type="interaction">
    <interactant intactId="EBI-10269209">
        <id>Q8NC24</id>
    </interactant>
    <interactant intactId="EBI-718439">
        <id>O95159</id>
        <label>ZFPL1</label>
    </interactant>
    <organismsDiffer>false</organismsDiffer>
    <experiments>3</experiments>
</comment>
<comment type="interaction">
    <interactant intactId="EBI-10269209">
        <id>Q8NC24</id>
    </interactant>
    <interactant intactId="EBI-1965483">
        <id>P17041</id>
        <label>ZNF32</label>
    </interactant>
    <organismsDiffer>false</organismsDiffer>
    <experiments>2</experiments>
</comment>
<comment type="subcellular location">
    <subcellularLocation>
        <location evidence="6">Cell membrane</location>
        <topology evidence="6">Single-pass membrane protein</topology>
    </subcellularLocation>
</comment>
<comment type="tissue specificity">
    <text evidence="6">Primarily expressed in spleen, thymus, testis, peripheral blood leukocytes, brain and placenta. Not detected in prostate, ovary, small intestine, colon, heart, lung, liver, skeletal muscle, kidney and pancreas.</text>
</comment>
<comment type="PTM">
    <text evidence="6">Phosphorylated in vitro by OXSR1.</text>
</comment>
<comment type="similarity">
    <text evidence="10">Belongs to the RELT family.</text>
</comment>
<accession>Q8NC24</accession>
<accession>D3DQE2</accession>
<accession>Q6P4E7</accession>
<accession>Q6UXY2</accession>
<proteinExistence type="evidence at protein level"/>
<sequence length="303" mass="32405">MSEPQPDLEPPQHGLYMLFLLVLVFFLMGLVGFMICHVLKKKGYRCRTSRGSEPDDAQLQPPEDDDMNEDTVERIVRCIIQNEANAEALKEMLGDSEGEGTVQLSSVDATSSLQDGAPSHHHTVHLGSAAPCLHCSRSKRPPLVRQGRSKEGKSRPRTGETTVFSVGRFRVTHIEKRYGLHEHRDGSPTDRSWGSGGGQDPGGGQGSGGGQPKAGMPAMERLPPERPQPQVLASPPVQNGGLRDSSLTPRALEGNPRASAEPTLRAGGRGPSPGLPTQEANGQPSKPDTSDHQVSLPQGAGSM</sequence>
<evidence type="ECO:0000250" key="1">
    <source>
        <dbReference type="UniProtKB" id="Q8BRJ3"/>
    </source>
</evidence>
<evidence type="ECO:0000255" key="2"/>
<evidence type="ECO:0000256" key="3">
    <source>
        <dbReference type="SAM" id="MobiDB-lite"/>
    </source>
</evidence>
<evidence type="ECO:0000269" key="4">
    <source>
    </source>
</evidence>
<evidence type="ECO:0000269" key="5">
    <source>
    </source>
</evidence>
<evidence type="ECO:0000269" key="6">
    <source>
    </source>
</evidence>
<evidence type="ECO:0000269" key="7">
    <source>
    </source>
</evidence>
<evidence type="ECO:0000269" key="8">
    <source>
    </source>
</evidence>
<evidence type="ECO:0000269" key="9">
    <source>
    </source>
</evidence>
<evidence type="ECO:0000305" key="10"/>